<evidence type="ECO:0000255" key="1">
    <source>
        <dbReference type="HAMAP-Rule" id="MF_00141"/>
    </source>
</evidence>
<proteinExistence type="inferred from homology"/>
<dbReference type="EMBL" id="AP009247">
    <property type="protein sequence ID" value="BAF61285.1"/>
    <property type="molecule type" value="Genomic_DNA"/>
</dbReference>
<dbReference type="RefSeq" id="WP_011929555.1">
    <property type="nucleotide sequence ID" value="NC_009465.1"/>
</dbReference>
<dbReference type="SMR" id="A5CXM6"/>
<dbReference type="STRING" id="412965.COSY_0151"/>
<dbReference type="KEGG" id="vok:COSY_0151"/>
<dbReference type="eggNOG" id="COG0231">
    <property type="taxonomic scope" value="Bacteria"/>
</dbReference>
<dbReference type="HOGENOM" id="CLU_074944_0_0_6"/>
<dbReference type="OrthoDB" id="9801844at2"/>
<dbReference type="UniPathway" id="UPA00345"/>
<dbReference type="Proteomes" id="UP000000247">
    <property type="component" value="Chromosome"/>
</dbReference>
<dbReference type="GO" id="GO:0005737">
    <property type="term" value="C:cytoplasm"/>
    <property type="evidence" value="ECO:0007669"/>
    <property type="project" value="UniProtKB-SubCell"/>
</dbReference>
<dbReference type="GO" id="GO:0003746">
    <property type="term" value="F:translation elongation factor activity"/>
    <property type="evidence" value="ECO:0007669"/>
    <property type="project" value="UniProtKB-UniRule"/>
</dbReference>
<dbReference type="GO" id="GO:0043043">
    <property type="term" value="P:peptide biosynthetic process"/>
    <property type="evidence" value="ECO:0007669"/>
    <property type="project" value="InterPro"/>
</dbReference>
<dbReference type="CDD" id="cd04470">
    <property type="entry name" value="S1_EF-P_repeat_1"/>
    <property type="match status" value="1"/>
</dbReference>
<dbReference type="CDD" id="cd05794">
    <property type="entry name" value="S1_EF-P_repeat_2"/>
    <property type="match status" value="1"/>
</dbReference>
<dbReference type="FunFam" id="2.30.30.30:FF:000003">
    <property type="entry name" value="Elongation factor P"/>
    <property type="match status" value="1"/>
</dbReference>
<dbReference type="FunFam" id="2.40.50.140:FF:000004">
    <property type="entry name" value="Elongation factor P"/>
    <property type="match status" value="1"/>
</dbReference>
<dbReference type="FunFam" id="2.40.50.140:FF:000009">
    <property type="entry name" value="Elongation factor P"/>
    <property type="match status" value="1"/>
</dbReference>
<dbReference type="Gene3D" id="2.30.30.30">
    <property type="match status" value="1"/>
</dbReference>
<dbReference type="Gene3D" id="2.40.50.140">
    <property type="entry name" value="Nucleic acid-binding proteins"/>
    <property type="match status" value="2"/>
</dbReference>
<dbReference type="HAMAP" id="MF_00141">
    <property type="entry name" value="EF_P"/>
    <property type="match status" value="1"/>
</dbReference>
<dbReference type="InterPro" id="IPR015365">
    <property type="entry name" value="Elong-fact-P_C"/>
</dbReference>
<dbReference type="InterPro" id="IPR012340">
    <property type="entry name" value="NA-bd_OB-fold"/>
</dbReference>
<dbReference type="InterPro" id="IPR014722">
    <property type="entry name" value="Rib_uL2_dom2"/>
</dbReference>
<dbReference type="InterPro" id="IPR020599">
    <property type="entry name" value="Transl_elong_fac_P/YeiP"/>
</dbReference>
<dbReference type="InterPro" id="IPR013185">
    <property type="entry name" value="Transl_elong_KOW-like"/>
</dbReference>
<dbReference type="InterPro" id="IPR001059">
    <property type="entry name" value="Transl_elong_P/YeiP_cen"/>
</dbReference>
<dbReference type="InterPro" id="IPR013852">
    <property type="entry name" value="Transl_elong_P/YeiP_CS"/>
</dbReference>
<dbReference type="InterPro" id="IPR011768">
    <property type="entry name" value="Transl_elongation_fac_P"/>
</dbReference>
<dbReference type="InterPro" id="IPR008991">
    <property type="entry name" value="Translation_prot_SH3-like_sf"/>
</dbReference>
<dbReference type="NCBIfam" id="TIGR00038">
    <property type="entry name" value="efp"/>
    <property type="match status" value="1"/>
</dbReference>
<dbReference type="NCBIfam" id="NF001810">
    <property type="entry name" value="PRK00529.1"/>
    <property type="match status" value="1"/>
</dbReference>
<dbReference type="PANTHER" id="PTHR30053">
    <property type="entry name" value="ELONGATION FACTOR P"/>
    <property type="match status" value="1"/>
</dbReference>
<dbReference type="PANTHER" id="PTHR30053:SF12">
    <property type="entry name" value="ELONGATION FACTOR P (EF-P) FAMILY PROTEIN"/>
    <property type="match status" value="1"/>
</dbReference>
<dbReference type="Pfam" id="PF01132">
    <property type="entry name" value="EFP"/>
    <property type="match status" value="1"/>
</dbReference>
<dbReference type="Pfam" id="PF08207">
    <property type="entry name" value="EFP_N"/>
    <property type="match status" value="1"/>
</dbReference>
<dbReference type="Pfam" id="PF09285">
    <property type="entry name" value="Elong-fact-P_C"/>
    <property type="match status" value="1"/>
</dbReference>
<dbReference type="PIRSF" id="PIRSF005901">
    <property type="entry name" value="EF-P"/>
    <property type="match status" value="1"/>
</dbReference>
<dbReference type="SMART" id="SM01185">
    <property type="entry name" value="EFP"/>
    <property type="match status" value="1"/>
</dbReference>
<dbReference type="SMART" id="SM00841">
    <property type="entry name" value="Elong-fact-P_C"/>
    <property type="match status" value="1"/>
</dbReference>
<dbReference type="SUPFAM" id="SSF50249">
    <property type="entry name" value="Nucleic acid-binding proteins"/>
    <property type="match status" value="2"/>
</dbReference>
<dbReference type="SUPFAM" id="SSF50104">
    <property type="entry name" value="Translation proteins SH3-like domain"/>
    <property type="match status" value="1"/>
</dbReference>
<dbReference type="PROSITE" id="PS01275">
    <property type="entry name" value="EFP"/>
    <property type="match status" value="1"/>
</dbReference>
<accession>A5CXM6</accession>
<organism>
    <name type="scientific">Vesicomyosocius okutanii subsp. Calyptogena okutanii (strain HA)</name>
    <dbReference type="NCBI Taxonomy" id="412965"/>
    <lineage>
        <taxon>Bacteria</taxon>
        <taxon>Pseudomonadati</taxon>
        <taxon>Pseudomonadota</taxon>
        <taxon>Gammaproteobacteria</taxon>
        <taxon>Candidatus Pseudothioglobaceae</taxon>
        <taxon>Candidatus Vesicomyosocius</taxon>
    </lineage>
</organism>
<name>EFP_VESOH</name>
<feature type="chain" id="PRO_1000010896" description="Elongation factor P">
    <location>
        <begin position="1"/>
        <end position="187"/>
    </location>
</feature>
<feature type="modified residue" description="N6-(3,6-diaminohexanoyl)-5-hydroxylysine" evidence="1">
    <location>
        <position position="34"/>
    </location>
</feature>
<gene>
    <name evidence="1" type="primary">efp</name>
    <name type="ordered locus">COSY_0151</name>
</gene>
<reference key="1">
    <citation type="journal article" date="2007" name="Curr. Biol.">
        <title>Reduced genome of the thioautotrophic intracellular symbiont in a deep-sea clam, Calyptogena okutanii.</title>
        <authorList>
            <person name="Kuwahara H."/>
            <person name="Yoshida T."/>
            <person name="Takaki Y."/>
            <person name="Shimamura S."/>
            <person name="Nishi S."/>
            <person name="Harada M."/>
            <person name="Matsuyama K."/>
            <person name="Takishita K."/>
            <person name="Kawato M."/>
            <person name="Uematsu K."/>
            <person name="Fujiwara Y."/>
            <person name="Sato T."/>
            <person name="Kato C."/>
            <person name="Kitagawa M."/>
            <person name="Kato I."/>
            <person name="Maruyama T."/>
        </authorList>
    </citation>
    <scope>NUCLEOTIDE SEQUENCE [LARGE SCALE GENOMIC DNA]</scope>
    <source>
        <strain>HA</strain>
    </source>
</reference>
<protein>
    <recommendedName>
        <fullName evidence="1">Elongation factor P</fullName>
        <shortName evidence="1">EF-P</shortName>
    </recommendedName>
</protein>
<sequence length="187" mass="20723">MDKYSINQFKNGLKLMLDSNPCSILNNEIVKPGKGQAFNRVKFKDLITGKTLIKTFKSGEFLEGADVMELDLQYLYNDGNAWNFMDPHSFEQYIIDGITVSSVKGYLVEQDICIVTLWNDNPISITPPNHVILEVFDTDPGLKGDTIGASGKPATMNTGVVLQVPLFVSIGDKVKVDTRINEYAGRA</sequence>
<keyword id="KW-0963">Cytoplasm</keyword>
<keyword id="KW-0251">Elongation factor</keyword>
<keyword id="KW-0379">Hydroxylation</keyword>
<keyword id="KW-0648">Protein biosynthesis</keyword>
<keyword id="KW-1185">Reference proteome</keyword>
<comment type="function">
    <text evidence="1">Involved in peptide bond synthesis. Alleviates ribosome stalling that occurs when 3 or more consecutive Pro residues or the sequence PPG is present in a protein, possibly by augmenting the peptidyl transferase activity of the ribosome. Modification of Lys-34 is required for alleviation.</text>
</comment>
<comment type="pathway">
    <text evidence="1">Protein biosynthesis; polypeptide chain elongation.</text>
</comment>
<comment type="subcellular location">
    <subcellularLocation>
        <location evidence="1">Cytoplasm</location>
    </subcellularLocation>
</comment>
<comment type="PTM">
    <text evidence="1">May be beta-lysylated on the epsilon-amino group of Lys-34 by the combined action of EpmA and EpmB, and then hydroxylated on the C5 position of the same residue by EpmC (if this protein is present). Lysylation is critical for the stimulatory effect of EF-P on peptide-bond formation. The lysylation moiety may extend toward the peptidyltransferase center and stabilize the terminal 3-CCA end of the tRNA. Hydroxylation of the C5 position on Lys-34 may allow additional potential stabilizing hydrogen-bond interactions with the P-tRNA.</text>
</comment>
<comment type="similarity">
    <text evidence="1">Belongs to the elongation factor P family.</text>
</comment>